<evidence type="ECO:0000255" key="1"/>
<dbReference type="EMBL" id="AE004439">
    <property type="protein sequence ID" value="AAK02714.1"/>
    <property type="molecule type" value="Genomic_DNA"/>
</dbReference>
<dbReference type="STRING" id="272843.PM0630"/>
<dbReference type="EnsemblBacteria" id="AAK02714">
    <property type="protein sequence ID" value="AAK02714"/>
    <property type="gene ID" value="PM0630"/>
</dbReference>
<dbReference type="KEGG" id="pmu:PM0630"/>
<dbReference type="HOGENOM" id="CLU_137299_0_0_6"/>
<dbReference type="Proteomes" id="UP000000809">
    <property type="component" value="Chromosome"/>
</dbReference>
<sequence>MKKIIAMSLLMFSVVMSVNAKNTVASKKEEQIAQPIAGFRLFDLSGKAPQLIEGNKFSRAKPHQLCIFVENVEVKEQNLLAEYFVAPAPIRMQAENAETRTTEDGTGNLIIFNLPKANIASGAITQCWQFSKNDPVGTYQLELQFNDIVFKGLAFQILK</sequence>
<accession>Q9CN17</accession>
<reference key="1">
    <citation type="journal article" date="2001" name="Proc. Natl. Acad. Sci. U.S.A.">
        <title>Complete genomic sequence of Pasteurella multocida Pm70.</title>
        <authorList>
            <person name="May B.J."/>
            <person name="Zhang Q."/>
            <person name="Li L.L."/>
            <person name="Paustian M.L."/>
            <person name="Whittam T.S."/>
            <person name="Kapur V."/>
        </authorList>
    </citation>
    <scope>NUCLEOTIDE SEQUENCE [LARGE SCALE GENOMIC DNA]</scope>
    <source>
        <strain>Pm70</strain>
    </source>
</reference>
<feature type="signal peptide" evidence="1">
    <location>
        <begin position="1"/>
        <end position="20"/>
    </location>
</feature>
<feature type="chain" id="PRO_0000014177" description="Uncharacterized protein PM0630">
    <location>
        <begin position="21"/>
        <end position="159"/>
    </location>
</feature>
<name>Y630_PASMU</name>
<organism>
    <name type="scientific">Pasteurella multocida (strain Pm70)</name>
    <dbReference type="NCBI Taxonomy" id="272843"/>
    <lineage>
        <taxon>Bacteria</taxon>
        <taxon>Pseudomonadati</taxon>
        <taxon>Pseudomonadota</taxon>
        <taxon>Gammaproteobacteria</taxon>
        <taxon>Pasteurellales</taxon>
        <taxon>Pasteurellaceae</taxon>
        <taxon>Pasteurella</taxon>
    </lineage>
</organism>
<gene>
    <name type="ordered locus">PM0630</name>
</gene>
<proteinExistence type="inferred from homology"/>
<protein>
    <recommendedName>
        <fullName>Uncharacterized protein PM0630</fullName>
    </recommendedName>
</protein>
<keyword id="KW-1185">Reference proteome</keyword>
<keyword id="KW-0732">Signal</keyword>